<organism>
    <name type="scientific">Vesicomyosocius okutanii subsp. Calyptogena okutanii (strain HA)</name>
    <dbReference type="NCBI Taxonomy" id="412965"/>
    <lineage>
        <taxon>Bacteria</taxon>
        <taxon>Pseudomonadati</taxon>
        <taxon>Pseudomonadota</taxon>
        <taxon>Gammaproteobacteria</taxon>
        <taxon>Candidatus Pseudothioglobaceae</taxon>
        <taxon>Candidatus Vesicomyosocius</taxon>
    </lineage>
</organism>
<evidence type="ECO:0000255" key="1">
    <source>
        <dbReference type="HAMAP-Rule" id="MF_00537"/>
    </source>
</evidence>
<evidence type="ECO:0000305" key="2"/>
<name>RS14_VESOH</name>
<proteinExistence type="inferred from homology"/>
<feature type="chain" id="PRO_1000128627" description="Small ribosomal subunit protein uS14">
    <location>
        <begin position="1"/>
        <end position="101"/>
    </location>
</feature>
<reference key="1">
    <citation type="journal article" date="2007" name="Curr. Biol.">
        <title>Reduced genome of the thioautotrophic intracellular symbiont in a deep-sea clam, Calyptogena okutanii.</title>
        <authorList>
            <person name="Kuwahara H."/>
            <person name="Yoshida T."/>
            <person name="Takaki Y."/>
            <person name="Shimamura S."/>
            <person name="Nishi S."/>
            <person name="Harada M."/>
            <person name="Matsuyama K."/>
            <person name="Takishita K."/>
            <person name="Kawato M."/>
            <person name="Uematsu K."/>
            <person name="Fujiwara Y."/>
            <person name="Sato T."/>
            <person name="Kato C."/>
            <person name="Kitagawa M."/>
            <person name="Kato I."/>
            <person name="Maruyama T."/>
        </authorList>
    </citation>
    <scope>NUCLEOTIDE SEQUENCE [LARGE SCALE GENOMIC DNA]</scope>
    <source>
        <strain>HA</strain>
    </source>
</reference>
<protein>
    <recommendedName>
        <fullName evidence="1">Small ribosomal subunit protein uS14</fullName>
    </recommendedName>
    <alternativeName>
        <fullName evidence="2">30S ribosomal protein S14</fullName>
    </alternativeName>
</protein>
<keyword id="KW-1185">Reference proteome</keyword>
<keyword id="KW-0687">Ribonucleoprotein</keyword>
<keyword id="KW-0689">Ribosomal protein</keyword>
<keyword id="KW-0694">RNA-binding</keyword>
<keyword id="KW-0699">rRNA-binding</keyword>
<sequence>MAKKSMMNRDIKRTKIVKKYKAKRLELKKIIKSINVSDEERFQATIKLQALPRNASPTRQRSRCSLTGRPHGFYRKFGLARNKLRECTMNGEVPGLSKASW</sequence>
<comment type="function">
    <text evidence="1">Binds 16S rRNA, required for the assembly of 30S particles and may also be responsible for determining the conformation of the 16S rRNA at the A site.</text>
</comment>
<comment type="subunit">
    <text evidence="1">Part of the 30S ribosomal subunit. Contacts proteins S3 and S10.</text>
</comment>
<comment type="similarity">
    <text evidence="1">Belongs to the universal ribosomal protein uS14 family.</text>
</comment>
<gene>
    <name evidence="1" type="primary">rpsN</name>
    <name type="ordered locus">COSY_0182</name>
</gene>
<accession>A5CXL7</accession>
<dbReference type="EMBL" id="AP009247">
    <property type="protein sequence ID" value="BAF61312.1"/>
    <property type="molecule type" value="Genomic_DNA"/>
</dbReference>
<dbReference type="RefSeq" id="WP_011929582.1">
    <property type="nucleotide sequence ID" value="NC_009465.1"/>
</dbReference>
<dbReference type="SMR" id="A5CXL7"/>
<dbReference type="STRING" id="412965.COSY_0182"/>
<dbReference type="KEGG" id="vok:COSY_0182"/>
<dbReference type="eggNOG" id="COG0199">
    <property type="taxonomic scope" value="Bacteria"/>
</dbReference>
<dbReference type="HOGENOM" id="CLU_139869_0_1_6"/>
<dbReference type="OrthoDB" id="9810484at2"/>
<dbReference type="Proteomes" id="UP000000247">
    <property type="component" value="Chromosome"/>
</dbReference>
<dbReference type="GO" id="GO:0005737">
    <property type="term" value="C:cytoplasm"/>
    <property type="evidence" value="ECO:0007669"/>
    <property type="project" value="UniProtKB-ARBA"/>
</dbReference>
<dbReference type="GO" id="GO:0015935">
    <property type="term" value="C:small ribosomal subunit"/>
    <property type="evidence" value="ECO:0007669"/>
    <property type="project" value="TreeGrafter"/>
</dbReference>
<dbReference type="GO" id="GO:0019843">
    <property type="term" value="F:rRNA binding"/>
    <property type="evidence" value="ECO:0007669"/>
    <property type="project" value="UniProtKB-UniRule"/>
</dbReference>
<dbReference type="GO" id="GO:0003735">
    <property type="term" value="F:structural constituent of ribosome"/>
    <property type="evidence" value="ECO:0007669"/>
    <property type="project" value="InterPro"/>
</dbReference>
<dbReference type="GO" id="GO:0006412">
    <property type="term" value="P:translation"/>
    <property type="evidence" value="ECO:0007669"/>
    <property type="project" value="UniProtKB-UniRule"/>
</dbReference>
<dbReference type="FunFam" id="1.10.287.1480:FF:000001">
    <property type="entry name" value="30S ribosomal protein S14"/>
    <property type="match status" value="1"/>
</dbReference>
<dbReference type="Gene3D" id="1.10.287.1480">
    <property type="match status" value="1"/>
</dbReference>
<dbReference type="HAMAP" id="MF_00537">
    <property type="entry name" value="Ribosomal_uS14_1"/>
    <property type="match status" value="1"/>
</dbReference>
<dbReference type="InterPro" id="IPR001209">
    <property type="entry name" value="Ribosomal_uS14"/>
</dbReference>
<dbReference type="InterPro" id="IPR023036">
    <property type="entry name" value="Ribosomal_uS14_bac/plastid"/>
</dbReference>
<dbReference type="NCBIfam" id="NF006477">
    <property type="entry name" value="PRK08881.1"/>
    <property type="match status" value="1"/>
</dbReference>
<dbReference type="PANTHER" id="PTHR19836">
    <property type="entry name" value="30S RIBOSOMAL PROTEIN S14"/>
    <property type="match status" value="1"/>
</dbReference>
<dbReference type="PANTHER" id="PTHR19836:SF19">
    <property type="entry name" value="SMALL RIBOSOMAL SUBUNIT PROTEIN US14M"/>
    <property type="match status" value="1"/>
</dbReference>
<dbReference type="Pfam" id="PF00253">
    <property type="entry name" value="Ribosomal_S14"/>
    <property type="match status" value="1"/>
</dbReference>
<dbReference type="SUPFAM" id="SSF57716">
    <property type="entry name" value="Glucocorticoid receptor-like (DNA-binding domain)"/>
    <property type="match status" value="1"/>
</dbReference>